<organism>
    <name type="scientific">Geotalea uraniireducens (strain Rf4)</name>
    <name type="common">Geobacter uraniireducens</name>
    <dbReference type="NCBI Taxonomy" id="351605"/>
    <lineage>
        <taxon>Bacteria</taxon>
        <taxon>Pseudomonadati</taxon>
        <taxon>Thermodesulfobacteriota</taxon>
        <taxon>Desulfuromonadia</taxon>
        <taxon>Geobacterales</taxon>
        <taxon>Geobacteraceae</taxon>
        <taxon>Geotalea</taxon>
    </lineage>
</organism>
<gene>
    <name evidence="1" type="primary">panC</name>
    <name type="ordered locus">Gura_2079</name>
</gene>
<accession>A5G3A1</accession>
<keyword id="KW-0067">ATP-binding</keyword>
<keyword id="KW-0963">Cytoplasm</keyword>
<keyword id="KW-0436">Ligase</keyword>
<keyword id="KW-0547">Nucleotide-binding</keyword>
<keyword id="KW-0566">Pantothenate biosynthesis</keyword>
<keyword id="KW-1185">Reference proteome</keyword>
<comment type="function">
    <text evidence="1">Catalyzes the condensation of pantoate with beta-alanine in an ATP-dependent reaction via a pantoyl-adenylate intermediate.</text>
</comment>
<comment type="catalytic activity">
    <reaction evidence="1">
        <text>(R)-pantoate + beta-alanine + ATP = (R)-pantothenate + AMP + diphosphate + H(+)</text>
        <dbReference type="Rhea" id="RHEA:10912"/>
        <dbReference type="ChEBI" id="CHEBI:15378"/>
        <dbReference type="ChEBI" id="CHEBI:15980"/>
        <dbReference type="ChEBI" id="CHEBI:29032"/>
        <dbReference type="ChEBI" id="CHEBI:30616"/>
        <dbReference type="ChEBI" id="CHEBI:33019"/>
        <dbReference type="ChEBI" id="CHEBI:57966"/>
        <dbReference type="ChEBI" id="CHEBI:456215"/>
        <dbReference type="EC" id="6.3.2.1"/>
    </reaction>
</comment>
<comment type="pathway">
    <text evidence="1">Cofactor biosynthesis; (R)-pantothenate biosynthesis; (R)-pantothenate from (R)-pantoate and beta-alanine: step 1/1.</text>
</comment>
<comment type="subunit">
    <text evidence="1">Homodimer.</text>
</comment>
<comment type="subcellular location">
    <subcellularLocation>
        <location evidence="1">Cytoplasm</location>
    </subcellularLocation>
</comment>
<comment type="miscellaneous">
    <text evidence="1">The reaction proceeds by a bi uni uni bi ping pong mechanism.</text>
</comment>
<comment type="similarity">
    <text evidence="1">Belongs to the pantothenate synthetase family.</text>
</comment>
<protein>
    <recommendedName>
        <fullName evidence="1">Pantothenate synthetase</fullName>
        <shortName evidence="1">PS</shortName>
        <ecNumber evidence="1">6.3.2.1</ecNumber>
    </recommendedName>
    <alternativeName>
        <fullName evidence="1">Pantoate--beta-alanine ligase</fullName>
    </alternativeName>
    <alternativeName>
        <fullName evidence="1">Pantoate-activating enzyme</fullName>
    </alternativeName>
</protein>
<reference key="1">
    <citation type="submission" date="2007-05" db="EMBL/GenBank/DDBJ databases">
        <title>Complete sequence of Geobacter uraniireducens Rf4.</title>
        <authorList>
            <consortium name="US DOE Joint Genome Institute"/>
            <person name="Copeland A."/>
            <person name="Lucas S."/>
            <person name="Lapidus A."/>
            <person name="Barry K."/>
            <person name="Detter J.C."/>
            <person name="Glavina del Rio T."/>
            <person name="Hammon N."/>
            <person name="Israni S."/>
            <person name="Dalin E."/>
            <person name="Tice H."/>
            <person name="Pitluck S."/>
            <person name="Chertkov O."/>
            <person name="Brettin T."/>
            <person name="Bruce D."/>
            <person name="Han C."/>
            <person name="Schmutz J."/>
            <person name="Larimer F."/>
            <person name="Land M."/>
            <person name="Hauser L."/>
            <person name="Kyrpides N."/>
            <person name="Mikhailova N."/>
            <person name="Shelobolina E."/>
            <person name="Aklujkar M."/>
            <person name="Lovley D."/>
            <person name="Richardson P."/>
        </authorList>
    </citation>
    <scope>NUCLEOTIDE SEQUENCE [LARGE SCALE GENOMIC DNA]</scope>
    <source>
        <strain>ATCC BAA-1134 / JCM 13001 / Rf4</strain>
    </source>
</reference>
<name>PANC_GEOUR</name>
<dbReference type="EC" id="6.3.2.1" evidence="1"/>
<dbReference type="EMBL" id="CP000698">
    <property type="protein sequence ID" value="ABQ26269.1"/>
    <property type="molecule type" value="Genomic_DNA"/>
</dbReference>
<dbReference type="RefSeq" id="WP_011938971.1">
    <property type="nucleotide sequence ID" value="NC_009483.1"/>
</dbReference>
<dbReference type="SMR" id="A5G3A1"/>
<dbReference type="STRING" id="351605.Gura_2079"/>
<dbReference type="KEGG" id="gur:Gura_2079"/>
<dbReference type="HOGENOM" id="CLU_047148_0_0_7"/>
<dbReference type="OrthoDB" id="9773087at2"/>
<dbReference type="UniPathway" id="UPA00028">
    <property type="reaction ID" value="UER00005"/>
</dbReference>
<dbReference type="Proteomes" id="UP000006695">
    <property type="component" value="Chromosome"/>
</dbReference>
<dbReference type="GO" id="GO:0005829">
    <property type="term" value="C:cytosol"/>
    <property type="evidence" value="ECO:0007669"/>
    <property type="project" value="TreeGrafter"/>
</dbReference>
<dbReference type="GO" id="GO:0005524">
    <property type="term" value="F:ATP binding"/>
    <property type="evidence" value="ECO:0007669"/>
    <property type="project" value="UniProtKB-KW"/>
</dbReference>
<dbReference type="GO" id="GO:0004592">
    <property type="term" value="F:pantoate-beta-alanine ligase activity"/>
    <property type="evidence" value="ECO:0007669"/>
    <property type="project" value="UniProtKB-UniRule"/>
</dbReference>
<dbReference type="GO" id="GO:0015940">
    <property type="term" value="P:pantothenate biosynthetic process"/>
    <property type="evidence" value="ECO:0007669"/>
    <property type="project" value="UniProtKB-UniRule"/>
</dbReference>
<dbReference type="CDD" id="cd00560">
    <property type="entry name" value="PanC"/>
    <property type="match status" value="1"/>
</dbReference>
<dbReference type="FunFam" id="3.30.1300.10:FF:000001">
    <property type="entry name" value="Pantothenate synthetase"/>
    <property type="match status" value="1"/>
</dbReference>
<dbReference type="FunFam" id="3.40.50.620:FF:000013">
    <property type="entry name" value="Pantothenate synthetase"/>
    <property type="match status" value="1"/>
</dbReference>
<dbReference type="Gene3D" id="3.40.50.620">
    <property type="entry name" value="HUPs"/>
    <property type="match status" value="1"/>
</dbReference>
<dbReference type="Gene3D" id="3.30.1300.10">
    <property type="entry name" value="Pantoate-beta-alanine ligase, C-terminal domain"/>
    <property type="match status" value="1"/>
</dbReference>
<dbReference type="HAMAP" id="MF_00158">
    <property type="entry name" value="PanC"/>
    <property type="match status" value="1"/>
</dbReference>
<dbReference type="InterPro" id="IPR003721">
    <property type="entry name" value="Pantoate_ligase"/>
</dbReference>
<dbReference type="InterPro" id="IPR042176">
    <property type="entry name" value="Pantoate_ligase_C"/>
</dbReference>
<dbReference type="InterPro" id="IPR014729">
    <property type="entry name" value="Rossmann-like_a/b/a_fold"/>
</dbReference>
<dbReference type="NCBIfam" id="TIGR00018">
    <property type="entry name" value="panC"/>
    <property type="match status" value="1"/>
</dbReference>
<dbReference type="PANTHER" id="PTHR21299">
    <property type="entry name" value="CYTIDYLATE KINASE/PANTOATE-BETA-ALANINE LIGASE"/>
    <property type="match status" value="1"/>
</dbReference>
<dbReference type="PANTHER" id="PTHR21299:SF1">
    <property type="entry name" value="PANTOATE--BETA-ALANINE LIGASE"/>
    <property type="match status" value="1"/>
</dbReference>
<dbReference type="Pfam" id="PF02569">
    <property type="entry name" value="Pantoate_ligase"/>
    <property type="match status" value="1"/>
</dbReference>
<dbReference type="SUPFAM" id="SSF52374">
    <property type="entry name" value="Nucleotidylyl transferase"/>
    <property type="match status" value="1"/>
</dbReference>
<sequence length="282" mass="30992">MKLIESIEEMQSTAINARQAGKTVALVPTMGYLHAGHASLMDEGRKRADILVASIFVNPTQFGAGEDFNTYPRDLEKDKLIAKAAGVDYIFAPKASDMYPTGYQTYVNVEKLTRPLCGASRPGHFRGVTTVVAKLFNIVMPHLALFGKKDFQQLTVIRRMAADLNMTVQIVGMPIVRESDGLAMSSRNAYLSQAERQSALCLSLALQSVRGAFRSGERSVEALRKLALDIINAEAFAVIDYVEFYHEATLTEVEQADDRTLVALAVKIGKTRLIDNCVLGED</sequence>
<evidence type="ECO:0000255" key="1">
    <source>
        <dbReference type="HAMAP-Rule" id="MF_00158"/>
    </source>
</evidence>
<proteinExistence type="inferred from homology"/>
<feature type="chain" id="PRO_1000076857" description="Pantothenate synthetase">
    <location>
        <begin position="1"/>
        <end position="282"/>
    </location>
</feature>
<feature type="active site" description="Proton donor" evidence="1">
    <location>
        <position position="37"/>
    </location>
</feature>
<feature type="binding site" evidence="1">
    <location>
        <begin position="30"/>
        <end position="37"/>
    </location>
    <ligand>
        <name>ATP</name>
        <dbReference type="ChEBI" id="CHEBI:30616"/>
    </ligand>
</feature>
<feature type="binding site" evidence="1">
    <location>
        <position position="61"/>
    </location>
    <ligand>
        <name>(R)-pantoate</name>
        <dbReference type="ChEBI" id="CHEBI:15980"/>
    </ligand>
</feature>
<feature type="binding site" evidence="1">
    <location>
        <position position="61"/>
    </location>
    <ligand>
        <name>beta-alanine</name>
        <dbReference type="ChEBI" id="CHEBI:57966"/>
    </ligand>
</feature>
<feature type="binding site" evidence="1">
    <location>
        <begin position="147"/>
        <end position="150"/>
    </location>
    <ligand>
        <name>ATP</name>
        <dbReference type="ChEBI" id="CHEBI:30616"/>
    </ligand>
</feature>
<feature type="binding site" evidence="1">
    <location>
        <position position="153"/>
    </location>
    <ligand>
        <name>(R)-pantoate</name>
        <dbReference type="ChEBI" id="CHEBI:15980"/>
    </ligand>
</feature>
<feature type="binding site" evidence="1">
    <location>
        <position position="176"/>
    </location>
    <ligand>
        <name>ATP</name>
        <dbReference type="ChEBI" id="CHEBI:30616"/>
    </ligand>
</feature>
<feature type="binding site" evidence="1">
    <location>
        <begin position="184"/>
        <end position="187"/>
    </location>
    <ligand>
        <name>ATP</name>
        <dbReference type="ChEBI" id="CHEBI:30616"/>
    </ligand>
</feature>